<sequence length="438" mass="46763">MFTPLSSVTALLALSSAFLGAQAGCKPKNYGPEKPHGGNGGNRGSGNGNSTSKFIAKGYYTGWNSDDFKPEQVSWSKYTQLAYAFGIPTDSANFNLSLDASNAESLDPFVTAAHEHGVQVTLSVGGWTGSLHLSYAVANAQNRTTFVKTLVDFVVKHKLDGLDVDWQSPNKLGLPCNAINANDTANLLLFLQELRKDPVGAKMILSATGNIVPWTDANGNPSADVSAFGKVLDHVTPLLYDVWGSWSDSVGPNSPLNDTCAAPDKQQGSVVSAVAKWNKAGIPLEKIVLGVGAYGHAFSVNKTKAYVNGTKELAAYPPFNKDIHPKGDKWDDPAGVDPCGVATPDGGIFTFWGLIEHGYLNEDGSPKRPYRFDNCSRTAYAYNEEEQVMVSFDDAQAFKEKGAFIKSQGLGGFSVWNAGSDHKDILLDAIRSGAGLSK</sequence>
<keyword id="KW-0147">Chitin-binding</keyword>
<keyword id="KW-0964">Secreted</keyword>
<keyword id="KW-0732">Signal</keyword>
<keyword id="KW-0843">Virulence</keyword>
<reference key="1">
    <citation type="journal article" date="2018" name="Curr. Biol.">
        <title>Suppression of plant immunity by fungal chitinase-like effectors.</title>
        <authorList>
            <person name="Fiorin G.L."/>
            <person name="Sanchez-Vallet A."/>
            <person name="Thomazella D.P.T."/>
            <person name="do Prado P.F.V."/>
            <person name="do Nascimento L.C."/>
            <person name="Figueira A.V.O."/>
            <person name="Thomma B.P.H.J."/>
            <person name="Pereira G.A.G."/>
            <person name="Teixeira P.J.P.L."/>
        </authorList>
    </citation>
    <scope>NUCLEOTIDE SEQUENCE [GENOMIC DNA]</scope>
    <scope>INDUCTION</scope>
    <scope>FUNCTION</scope>
    <scope>CHITIN-BINDING</scope>
    <scope>SUBCELLULAR LOCATION</scope>
    <scope>MUTAGENESIS OF GLN-167 AND LEU-238</scope>
    <source>
        <strain>CP02</strain>
    </source>
</reference>
<dbReference type="EMBL" id="MH481742">
    <property type="protein sequence ID" value="AYA60263.1"/>
    <property type="molecule type" value="Genomic_DNA"/>
</dbReference>
<dbReference type="SMR" id="A0A385MIS5"/>
<dbReference type="GO" id="GO:0005576">
    <property type="term" value="C:extracellular region"/>
    <property type="evidence" value="ECO:0007669"/>
    <property type="project" value="UniProtKB-SubCell"/>
</dbReference>
<dbReference type="GO" id="GO:0008061">
    <property type="term" value="F:chitin binding"/>
    <property type="evidence" value="ECO:0000314"/>
    <property type="project" value="PHI-base"/>
</dbReference>
<dbReference type="GO" id="GO:0140320">
    <property type="term" value="F:PAMP receptor decoy activity"/>
    <property type="evidence" value="ECO:0000269"/>
    <property type="project" value="PHI-base"/>
</dbReference>
<dbReference type="GO" id="GO:0005975">
    <property type="term" value="P:carbohydrate metabolic process"/>
    <property type="evidence" value="ECO:0007669"/>
    <property type="project" value="InterPro"/>
</dbReference>
<dbReference type="GO" id="GO:0006032">
    <property type="term" value="P:chitin catabolic process"/>
    <property type="evidence" value="ECO:0007669"/>
    <property type="project" value="TreeGrafter"/>
</dbReference>
<dbReference type="GO" id="GO:0140423">
    <property type="term" value="P:effector-mediated suppression of host pattern-triggered immunity signaling"/>
    <property type="evidence" value="ECO:0000315"/>
    <property type="project" value="PHI-base"/>
</dbReference>
<dbReference type="Gene3D" id="3.10.50.10">
    <property type="match status" value="1"/>
</dbReference>
<dbReference type="Gene3D" id="3.20.20.80">
    <property type="entry name" value="Glycosidases"/>
    <property type="match status" value="1"/>
</dbReference>
<dbReference type="InterPro" id="IPR011583">
    <property type="entry name" value="Chitinase_II/V-like_cat"/>
</dbReference>
<dbReference type="InterPro" id="IPR029070">
    <property type="entry name" value="Chitinase_insertion_sf"/>
</dbReference>
<dbReference type="InterPro" id="IPR001223">
    <property type="entry name" value="Glyco_hydro18_cat"/>
</dbReference>
<dbReference type="InterPro" id="IPR017853">
    <property type="entry name" value="Glycoside_hydrolase_SF"/>
</dbReference>
<dbReference type="InterPro" id="IPR050314">
    <property type="entry name" value="Glycosyl_Hydrlase_18"/>
</dbReference>
<dbReference type="PANTHER" id="PTHR11177">
    <property type="entry name" value="CHITINASE"/>
    <property type="match status" value="1"/>
</dbReference>
<dbReference type="PANTHER" id="PTHR11177:SF317">
    <property type="entry name" value="CHITINASE 12-RELATED"/>
    <property type="match status" value="1"/>
</dbReference>
<dbReference type="Pfam" id="PF00704">
    <property type="entry name" value="Glyco_hydro_18"/>
    <property type="match status" value="1"/>
</dbReference>
<dbReference type="SMART" id="SM00636">
    <property type="entry name" value="Glyco_18"/>
    <property type="match status" value="1"/>
</dbReference>
<dbReference type="SUPFAM" id="SSF51445">
    <property type="entry name" value="(Trans)glycosidases"/>
    <property type="match status" value="1"/>
</dbReference>
<dbReference type="SUPFAM" id="SSF54556">
    <property type="entry name" value="Chitinase insertion domain"/>
    <property type="match status" value="1"/>
</dbReference>
<dbReference type="PROSITE" id="PS51910">
    <property type="entry name" value="GH18_2"/>
    <property type="match status" value="1"/>
</dbReference>
<accession>A0A385MIS5</accession>
<proteinExistence type="evidence at protein level"/>
<gene>
    <name evidence="4" type="primary">Chi</name>
</gene>
<name>CHI_MONPR</name>
<evidence type="ECO:0000255" key="1"/>
<evidence type="ECO:0000255" key="2">
    <source>
        <dbReference type="PROSITE-ProRule" id="PRU01258"/>
    </source>
</evidence>
<evidence type="ECO:0000269" key="3">
    <source>
    </source>
</evidence>
<evidence type="ECO:0000303" key="4">
    <source>
    </source>
</evidence>
<evidence type="ECO:0000305" key="5"/>
<evidence type="ECO:0000305" key="6">
    <source>
    </source>
</evidence>
<protein>
    <recommendedName>
        <fullName evidence="4">chitinase-like effector</fullName>
    </recommendedName>
</protein>
<organism>
    <name type="scientific">Moniliophthora perniciosa</name>
    <name type="common">Witches'-broom disease fungus</name>
    <name type="synonym">Marasmius perniciosus</name>
    <dbReference type="NCBI Taxonomy" id="153609"/>
    <lineage>
        <taxon>Eukaryota</taxon>
        <taxon>Fungi</taxon>
        <taxon>Dikarya</taxon>
        <taxon>Basidiomycota</taxon>
        <taxon>Agaricomycotina</taxon>
        <taxon>Agaricomycetes</taxon>
        <taxon>Agaricomycetidae</taxon>
        <taxon>Agaricales</taxon>
        <taxon>Marasmiineae</taxon>
        <taxon>Marasmiaceae</taxon>
        <taxon>Moniliophthora</taxon>
    </lineage>
</organism>
<comment type="function">
    <text evidence="3">Catalytically impaired chitinase that binds efficiently to chitin, but not to chitosan, xylan, or cellulose (PubMed:30220500). Despite the lack of chitinolytic activity, retains substrate binding specificity and acts as an effector to prevent chitin-triggered immunity by sequestering immunogenic chitin fragments (PubMed:30220500). Does not function in the protection of fungal cell wall against plant hydrolytic enzymes (PubMed:30220500).</text>
</comment>
<comment type="subcellular location">
    <subcellularLocation>
        <location evidence="6">Secreted</location>
    </subcellularLocation>
</comment>
<comment type="induction">
    <text evidence="3">Expressed during the biotrophic interaction with cacao.</text>
</comment>
<comment type="miscellaneous">
    <text evidence="5">In plants, chitin acts as a microbe-associated molecular pattern (MAMP) that is recognized by lysin motif (LysM)-containing plant cell surface-localized pattern recognition receptors (PRRs) that activate a plethora of downstream immune responses.</text>
</comment>
<comment type="similarity">
    <text evidence="2">Belongs to the glycosyl hydrolase 18 family.</text>
</comment>
<comment type="caution">
    <text evidence="3">Chi has substitutions in residues that are highly conserved in GH18 chitinases (E167Q and M238L) that form an interface in the catalytic pocket where the cleavage of the substrate occurs and is, therefore, enzymatically inactive.</text>
</comment>
<feature type="signal peptide" evidence="1">
    <location>
        <begin position="1"/>
        <end position="23"/>
    </location>
</feature>
<feature type="chain" id="PRO_5017473593" description="chitinase-like effector">
    <location>
        <begin position="24"/>
        <end position="438"/>
    </location>
</feature>
<feature type="domain" description="GH18" evidence="2">
    <location>
        <begin position="54"/>
        <end position="437"/>
    </location>
</feature>
<feature type="binding site" evidence="2">
    <location>
        <position position="416"/>
    </location>
    <ligand>
        <name>chitin</name>
        <dbReference type="ChEBI" id="CHEBI:17029"/>
    </ligand>
</feature>
<feature type="mutagenesis site" description="Recovers chitinase activity; when associated with M-238." evidence="3">
    <original>Q</original>
    <variation>E</variation>
    <location>
        <position position="167"/>
    </location>
</feature>
<feature type="mutagenesis site" description="Recovers chitinase activity; when associated with E-167." evidence="3">
    <original>L</original>
    <variation>M</variation>
    <location>
        <position position="238"/>
    </location>
</feature>